<protein>
    <recommendedName>
        <fullName>NUT family member 2B</fullName>
    </recommendedName>
</protein>
<sequence length="878" mass="93984">MEVKGPSGRSFCCESEGQFKSCLKRHTPSLLLPSSWKGNSGSCLMAEALHRTSPTPNSCPLPLPLCRMSGVLCSRNLFTFKFSLFQLDSGASGEPGHSLGLTLGFSYCGNCQTAVVSAQPEGMASNGAYPVLGPGVTANPGTSLSVFTALPFTTPAPGPAHGPLLVTAGAPPGGPLVLSTFPSTPLVTEQDGCGPSGAGASNVFVQMRTEVGPVKAAQAQTLVLTQAPLVWQAPGALCGGVVCPPPLLLAAAPVVPVMAAQVVGGTQACEGGWSQGLPLPPPPPPAAQLPPIVSQGNAGPWPQGAHGESSLASSQAKAPPDDSCNPRSVYENFRLWQHYKPLARRHLPQSPDTEALSCFLIPVLRSLARRKPTMTLEEGLWRAMREWQHTSNFDRMIFYEMAEKFLEFEAEEEMQIQKSQWMKGPQCLPPPATPRLEPRGPPAPEVVKQPVYLPSKAGPKAPTACLPPPRPQRPVTKARRPPPRPHRRAETKARLPPPRPQRPAETKVPEEIPPEVVQEYVDIMEELLGPSLGATGEPEKQREEGKVKQPQEEDWTPPDPGLLSYIDKLCSQKDFVTKVEAVIHPQFLEELLSPDPQMDFLALSQDLEQEEGLTLAQLVEKRLPPLKEKQHARAAPSRGTARLDSSSSKFAAGQGAERDVPDPQQGVGMETCPPQMTARDSQGRGRAHTGMARSEDSVVLLGCQDSPGLRAAWPTSPPQDHRPTCPGVGTKDALDLPGGSPVRESHGLAQGSSEEEELPSLAFLLGSQHKLLPWWLPQSPVPASGLLSPEKWGPQGTHQSPSAERRGLNLAPSPANKAKKRPLFGSLSPAEKTPYPGPGLRVSGEQSLTWGLGGPSQSQKRKGDPLVSRKEKKQHCSQ</sequence>
<comment type="alternative products">
    <event type="alternative splicing"/>
    <isoform>
        <id>A6NNL0-1</id>
        <name>1</name>
        <sequence type="displayed"/>
    </isoform>
    <isoform>
        <id>A6NNL0-2</id>
        <name>2</name>
        <sequence type="described" ref="VSP_034025 VSP_034026 VSP_034027"/>
    </isoform>
</comment>
<comment type="similarity">
    <text evidence="2">Belongs to the NUT family.</text>
</comment>
<accession>A6NNL0</accession>
<accession>A6NM73</accession>
<name>NTM2B_HUMAN</name>
<keyword id="KW-0025">Alternative splicing</keyword>
<keyword id="KW-1185">Reference proteome</keyword>
<proteinExistence type="inferred from homology"/>
<dbReference type="EMBL" id="AL132656">
    <property type="status" value="NOT_ANNOTATED_CDS"/>
    <property type="molecule type" value="Genomic_DNA"/>
</dbReference>
<dbReference type="CCDS" id="CCDS60574.1">
    <molecule id="A6NNL0-1"/>
</dbReference>
<dbReference type="RefSeq" id="NP_001265424.1">
    <molecule id="A6NNL0-1"/>
    <property type="nucleotide sequence ID" value="NM_001278495.2"/>
</dbReference>
<dbReference type="RefSeq" id="XP_047281663.1">
    <molecule id="A6NNL0-1"/>
    <property type="nucleotide sequence ID" value="XM_047425707.1"/>
</dbReference>
<dbReference type="SMR" id="A6NNL0"/>
<dbReference type="BioGRID" id="609665">
    <property type="interactions" value="4"/>
</dbReference>
<dbReference type="FunCoup" id="A6NNL0">
    <property type="interactions" value="1"/>
</dbReference>
<dbReference type="STRING" id="9606.ENSP00000394623"/>
<dbReference type="GlyGen" id="A6NNL0">
    <property type="glycosylation" value="1 site, 1 O-linked glycan (1 site)"/>
</dbReference>
<dbReference type="iPTMnet" id="A6NNL0"/>
<dbReference type="PhosphoSitePlus" id="A6NNL0"/>
<dbReference type="BioMuta" id="NUTM2B"/>
<dbReference type="jPOST" id="A6NNL0"/>
<dbReference type="MassIVE" id="A6NNL0"/>
<dbReference type="PaxDb" id="9606-ENSP00000394623"/>
<dbReference type="PeptideAtlas" id="A6NNL0"/>
<dbReference type="ProteomicsDB" id="1615">
    <molecule id="A6NNL0-1"/>
</dbReference>
<dbReference type="Antibodypedia" id="70785">
    <property type="antibodies" value="9 antibodies from 5 providers"/>
</dbReference>
<dbReference type="DNASU" id="729262"/>
<dbReference type="Ensembl" id="ENST00000372321.6">
    <molecule id="A6NNL0-2"/>
    <property type="protein sequence ID" value="ENSP00000361396.2"/>
    <property type="gene ID" value="ENSG00000188199.11"/>
</dbReference>
<dbReference type="Ensembl" id="ENST00000429828.7">
    <molecule id="A6NNL0-1"/>
    <property type="protein sequence ID" value="ENSP00000394623.1"/>
    <property type="gene ID" value="ENSG00000188199.11"/>
</dbReference>
<dbReference type="GeneID" id="729262"/>
<dbReference type="KEGG" id="hsa:729262"/>
<dbReference type="MANE-Select" id="ENST00000429828.7">
    <property type="protein sequence ID" value="ENSP00000394623.1"/>
    <property type="RefSeq nucleotide sequence ID" value="NM_001278495.2"/>
    <property type="RefSeq protein sequence ID" value="NP_001265424.1"/>
</dbReference>
<dbReference type="UCSC" id="uc031wmo.1">
    <molecule id="A6NNL0-1"/>
    <property type="organism name" value="human"/>
</dbReference>
<dbReference type="AGR" id="HGNC:23445"/>
<dbReference type="CTD" id="729262"/>
<dbReference type="DisGeNET" id="729262"/>
<dbReference type="GeneCards" id="NUTM2B"/>
<dbReference type="HGNC" id="HGNC:23445">
    <property type="gene designation" value="NUTM2B"/>
</dbReference>
<dbReference type="HPA" id="ENSG00000188199">
    <property type="expression patterns" value="Low tissue specificity"/>
</dbReference>
<dbReference type="MalaCards" id="NUTM2B"/>
<dbReference type="neXtProt" id="NX_A6NNL0"/>
<dbReference type="OpenTargets" id="ENSG00000188199"/>
<dbReference type="Orphanet" id="457246">
    <property type="disease" value="Clear cell sarcoma of kidney"/>
</dbReference>
<dbReference type="Orphanet" id="213711">
    <property type="disease" value="Endometrial stromal sarcoma"/>
</dbReference>
<dbReference type="PharmGKB" id="PA134908712"/>
<dbReference type="VEuPathDB" id="HostDB:ENSG00000188199"/>
<dbReference type="eggNOG" id="ENOG502RU0F">
    <property type="taxonomic scope" value="Eukaryota"/>
</dbReference>
<dbReference type="GeneTree" id="ENSGT00410000025793"/>
<dbReference type="InParanoid" id="A6NNL0"/>
<dbReference type="OMA" id="MFCCESE"/>
<dbReference type="OrthoDB" id="9536811at2759"/>
<dbReference type="PAN-GO" id="A6NNL0">
    <property type="GO annotations" value="0 GO annotations based on evolutionary models"/>
</dbReference>
<dbReference type="PhylomeDB" id="A6NNL0"/>
<dbReference type="TreeFam" id="TF337728"/>
<dbReference type="PathwayCommons" id="A6NNL0"/>
<dbReference type="BioGRID-ORCS" id="729262">
    <property type="hits" value="14 hits in 922 CRISPR screens"/>
</dbReference>
<dbReference type="ChiTaRS" id="NUTM2B">
    <property type="organism name" value="human"/>
</dbReference>
<dbReference type="GenomeRNAi" id="729262"/>
<dbReference type="Pharos" id="A6NNL0">
    <property type="development level" value="Tdark"/>
</dbReference>
<dbReference type="PRO" id="PR:A6NNL0"/>
<dbReference type="Proteomes" id="UP000005640">
    <property type="component" value="Chromosome 10"/>
</dbReference>
<dbReference type="RNAct" id="A6NNL0">
    <property type="molecule type" value="protein"/>
</dbReference>
<dbReference type="Bgee" id="ENSG00000188199">
    <property type="expression patterns" value="Expressed in cortical plate and 99 other cell types or tissues"/>
</dbReference>
<dbReference type="ExpressionAtlas" id="A6NNL0">
    <property type="expression patterns" value="baseline and differential"/>
</dbReference>
<dbReference type="InterPro" id="IPR024310">
    <property type="entry name" value="NUT"/>
</dbReference>
<dbReference type="InterPro" id="IPR024309">
    <property type="entry name" value="NUT_N"/>
</dbReference>
<dbReference type="PANTHER" id="PTHR22879">
    <property type="entry name" value="NUT FAMILY MEMBER 1"/>
    <property type="match status" value="1"/>
</dbReference>
<dbReference type="PANTHER" id="PTHR22879:SF14">
    <property type="entry name" value="NUT FAMILY MEMBER 2A-RELATED"/>
    <property type="match status" value="1"/>
</dbReference>
<dbReference type="Pfam" id="PF12881">
    <property type="entry name" value="NUT"/>
    <property type="match status" value="1"/>
</dbReference>
<feature type="chain" id="PRO_0000337992" description="NUT family member 2B">
    <location>
        <begin position="1"/>
        <end position="878"/>
    </location>
</feature>
<feature type="region of interest" description="Disordered" evidence="1">
    <location>
        <begin position="273"/>
        <end position="324"/>
    </location>
</feature>
<feature type="region of interest" description="Disordered" evidence="1">
    <location>
        <begin position="417"/>
        <end position="512"/>
    </location>
</feature>
<feature type="region of interest" description="Disordered" evidence="1">
    <location>
        <begin position="527"/>
        <end position="560"/>
    </location>
</feature>
<feature type="region of interest" description="Disordered" evidence="1">
    <location>
        <begin position="624"/>
        <end position="693"/>
    </location>
</feature>
<feature type="region of interest" description="Disordered" evidence="1">
    <location>
        <begin position="709"/>
        <end position="757"/>
    </location>
</feature>
<feature type="region of interest" description="Disordered" evidence="1">
    <location>
        <begin position="775"/>
        <end position="878"/>
    </location>
</feature>
<feature type="compositionally biased region" description="Pro residues" evidence="1">
    <location>
        <begin position="278"/>
        <end position="288"/>
    </location>
</feature>
<feature type="compositionally biased region" description="Pro residues" evidence="1">
    <location>
        <begin position="427"/>
        <end position="444"/>
    </location>
</feature>
<feature type="compositionally biased region" description="Basic residues" evidence="1">
    <location>
        <begin position="476"/>
        <end position="487"/>
    </location>
</feature>
<feature type="compositionally biased region" description="Basic and acidic residues" evidence="1">
    <location>
        <begin position="537"/>
        <end position="551"/>
    </location>
</feature>
<feature type="splice variant" id="VSP_034025" description="In isoform 2." evidence="2">
    <location>
        <begin position="617"/>
        <end position="653"/>
    </location>
</feature>
<feature type="splice variant" id="VSP_034026" description="In isoform 2." evidence="2">
    <original>ERDVPDPQQGVGMETC</original>
    <variation>PSDAPGTDRC</variation>
    <location>
        <begin position="657"/>
        <end position="672"/>
    </location>
</feature>
<feature type="splice variant" id="VSP_034027" description="In isoform 2." evidence="2">
    <location>
        <begin position="673"/>
        <end position="878"/>
    </location>
</feature>
<organism>
    <name type="scientific">Homo sapiens</name>
    <name type="common">Human</name>
    <dbReference type="NCBI Taxonomy" id="9606"/>
    <lineage>
        <taxon>Eukaryota</taxon>
        <taxon>Metazoa</taxon>
        <taxon>Chordata</taxon>
        <taxon>Craniata</taxon>
        <taxon>Vertebrata</taxon>
        <taxon>Euteleostomi</taxon>
        <taxon>Mammalia</taxon>
        <taxon>Eutheria</taxon>
        <taxon>Euarchontoglires</taxon>
        <taxon>Primates</taxon>
        <taxon>Haplorrhini</taxon>
        <taxon>Catarrhini</taxon>
        <taxon>Hominidae</taxon>
        <taxon>Homo</taxon>
    </lineage>
</organism>
<evidence type="ECO:0000256" key="1">
    <source>
        <dbReference type="SAM" id="MobiDB-lite"/>
    </source>
</evidence>
<evidence type="ECO:0000305" key="2"/>
<gene>
    <name type="primary">NUTM2B</name>
    <name type="synonym">FAM22B</name>
</gene>
<reference key="1">
    <citation type="journal article" date="2004" name="Nature">
        <title>The DNA sequence and comparative analysis of human chromosome 10.</title>
        <authorList>
            <person name="Deloukas P."/>
            <person name="Earthrowl M.E."/>
            <person name="Grafham D.V."/>
            <person name="Rubenfield M."/>
            <person name="French L."/>
            <person name="Steward C.A."/>
            <person name="Sims S.K."/>
            <person name="Jones M.C."/>
            <person name="Searle S."/>
            <person name="Scott C."/>
            <person name="Howe K."/>
            <person name="Hunt S.E."/>
            <person name="Andrews T.D."/>
            <person name="Gilbert J.G.R."/>
            <person name="Swarbreck D."/>
            <person name="Ashurst J.L."/>
            <person name="Taylor A."/>
            <person name="Battles J."/>
            <person name="Bird C.P."/>
            <person name="Ainscough R."/>
            <person name="Almeida J.P."/>
            <person name="Ashwell R.I.S."/>
            <person name="Ambrose K.D."/>
            <person name="Babbage A.K."/>
            <person name="Bagguley C.L."/>
            <person name="Bailey J."/>
            <person name="Banerjee R."/>
            <person name="Bates K."/>
            <person name="Beasley H."/>
            <person name="Bray-Allen S."/>
            <person name="Brown A.J."/>
            <person name="Brown J.Y."/>
            <person name="Burford D.C."/>
            <person name="Burrill W."/>
            <person name="Burton J."/>
            <person name="Cahill P."/>
            <person name="Camire D."/>
            <person name="Carter N.P."/>
            <person name="Chapman J.C."/>
            <person name="Clark S.Y."/>
            <person name="Clarke G."/>
            <person name="Clee C.M."/>
            <person name="Clegg S."/>
            <person name="Corby N."/>
            <person name="Coulson A."/>
            <person name="Dhami P."/>
            <person name="Dutta I."/>
            <person name="Dunn M."/>
            <person name="Faulkner L."/>
            <person name="Frankish A."/>
            <person name="Frankland J.A."/>
            <person name="Garner P."/>
            <person name="Garnett J."/>
            <person name="Gribble S."/>
            <person name="Griffiths C."/>
            <person name="Grocock R."/>
            <person name="Gustafson E."/>
            <person name="Hammond S."/>
            <person name="Harley J.L."/>
            <person name="Hart E."/>
            <person name="Heath P.D."/>
            <person name="Ho T.P."/>
            <person name="Hopkins B."/>
            <person name="Horne J."/>
            <person name="Howden P.J."/>
            <person name="Huckle E."/>
            <person name="Hynds C."/>
            <person name="Johnson C."/>
            <person name="Johnson D."/>
            <person name="Kana A."/>
            <person name="Kay M."/>
            <person name="Kimberley A.M."/>
            <person name="Kershaw J.K."/>
            <person name="Kokkinaki M."/>
            <person name="Laird G.K."/>
            <person name="Lawlor S."/>
            <person name="Lee H.M."/>
            <person name="Leongamornlert D.A."/>
            <person name="Laird G."/>
            <person name="Lloyd C."/>
            <person name="Lloyd D.M."/>
            <person name="Loveland J."/>
            <person name="Lovell J."/>
            <person name="McLaren S."/>
            <person name="McLay K.E."/>
            <person name="McMurray A."/>
            <person name="Mashreghi-Mohammadi M."/>
            <person name="Matthews L."/>
            <person name="Milne S."/>
            <person name="Nickerson T."/>
            <person name="Nguyen M."/>
            <person name="Overton-Larty E."/>
            <person name="Palmer S.A."/>
            <person name="Pearce A.V."/>
            <person name="Peck A.I."/>
            <person name="Pelan S."/>
            <person name="Phillimore B."/>
            <person name="Porter K."/>
            <person name="Rice C.M."/>
            <person name="Rogosin A."/>
            <person name="Ross M.T."/>
            <person name="Sarafidou T."/>
            <person name="Sehra H.K."/>
            <person name="Shownkeen R."/>
            <person name="Skuce C.D."/>
            <person name="Smith M."/>
            <person name="Standring L."/>
            <person name="Sycamore N."/>
            <person name="Tester J."/>
            <person name="Thorpe A."/>
            <person name="Torcasso W."/>
            <person name="Tracey A."/>
            <person name="Tromans A."/>
            <person name="Tsolas J."/>
            <person name="Wall M."/>
            <person name="Walsh J."/>
            <person name="Wang H."/>
            <person name="Weinstock K."/>
            <person name="West A.P."/>
            <person name="Willey D.L."/>
            <person name="Whitehead S.L."/>
            <person name="Wilming L."/>
            <person name="Wray P.W."/>
            <person name="Young L."/>
            <person name="Chen Y."/>
            <person name="Lovering R.C."/>
            <person name="Moschonas N.K."/>
            <person name="Siebert R."/>
            <person name="Fechtel K."/>
            <person name="Bentley D."/>
            <person name="Durbin R.M."/>
            <person name="Hubbard T."/>
            <person name="Doucette-Stamm L."/>
            <person name="Beck S."/>
            <person name="Smith D.R."/>
            <person name="Rogers J."/>
        </authorList>
    </citation>
    <scope>NUCLEOTIDE SEQUENCE [LARGE SCALE GENOMIC DNA]</scope>
</reference>